<protein>
    <recommendedName>
        <fullName evidence="5">Pregnancy-associated glycoprotein 63J</fullName>
        <ecNumber evidence="2">3.4.23.-</ecNumber>
    </recommendedName>
</protein>
<accession>P86370</accession>
<feature type="chain" id="PRO_0000389538" description="Pregnancy-associated glycoprotein 63J">
    <location>
        <begin position="1"/>
        <end position="15" status="greater than"/>
    </location>
</feature>
<feature type="non-terminal residue" evidence="5">
    <location>
        <position position="15"/>
    </location>
</feature>
<sequence>RGSXLTILPLRNISD</sequence>
<proteinExistence type="evidence at protein level"/>
<name>PA63J_BUBBU</name>
<keyword id="KW-0064">Aspartyl protease</keyword>
<keyword id="KW-0903">Direct protein sequencing</keyword>
<keyword id="KW-0325">Glycoprotein</keyword>
<keyword id="KW-0378">Hydrolase</keyword>
<keyword id="KW-0645">Protease</keyword>
<keyword id="KW-0964">Secreted</keyword>
<organism>
    <name type="scientific">Bubalus bubalis</name>
    <name type="common">Domestic water buffalo</name>
    <dbReference type="NCBI Taxonomy" id="89462"/>
    <lineage>
        <taxon>Eukaryota</taxon>
        <taxon>Metazoa</taxon>
        <taxon>Chordata</taxon>
        <taxon>Craniata</taxon>
        <taxon>Vertebrata</taxon>
        <taxon>Euteleostomi</taxon>
        <taxon>Mammalia</taxon>
        <taxon>Eutheria</taxon>
        <taxon>Laurasiatheria</taxon>
        <taxon>Artiodactyla</taxon>
        <taxon>Ruminantia</taxon>
        <taxon>Pecora</taxon>
        <taxon>Bovidae</taxon>
        <taxon>Bovinae</taxon>
        <taxon>Bubalus</taxon>
    </lineage>
</organism>
<evidence type="ECO:0000250" key="1">
    <source>
        <dbReference type="UniProtKB" id="P84918"/>
    </source>
</evidence>
<evidence type="ECO:0000250" key="2">
    <source>
        <dbReference type="UniProtKB" id="P85049"/>
    </source>
</evidence>
<evidence type="ECO:0000255" key="3"/>
<evidence type="ECO:0000269" key="4">
    <source>
    </source>
</evidence>
<evidence type="ECO:0000303" key="5">
    <source>
    </source>
</evidence>
<evidence type="ECO:0000305" key="6"/>
<comment type="subcellular location">
    <subcellularLocation>
        <location evidence="2">Secreted</location>
        <location evidence="2">Extracellular space</location>
    </subcellularLocation>
</comment>
<comment type="tissue specificity">
    <text evidence="4">Expressed in chorionic epithelium (trophectoderm).</text>
</comment>
<comment type="developmental stage">
    <text evidence="4">Expressed during 8th month of pregnancy.</text>
</comment>
<comment type="PTM">
    <text evidence="1">N-glycosylated.</text>
</comment>
<comment type="similarity">
    <text evidence="3">Belongs to the peptidase A1 family.</text>
</comment>
<reference evidence="6" key="1">
    <citation type="journal article" date="2013" name="BMC Vet. Res.">
        <title>Purification of pregnancy-associated glycoproteins from late-pregnancy Bubalus bubalis placentas and development of a radioimmunoassay for pregnancy diagnosis in water buffalo females.</title>
        <authorList>
            <person name="Barbato O."/>
            <person name="Melo de Sousa N."/>
            <person name="Barile V.L."/>
            <person name="Canali C."/>
            <person name="Beckers J.F."/>
        </authorList>
    </citation>
    <scope>PROTEIN SEQUENCE</scope>
    <scope>TISSUE SPECIFICITY</scope>
    <scope>DEVELOPMENTAL STAGE</scope>
    <source>
        <tissue evidence="4">Fetal cotyledon</tissue>
    </source>
</reference>
<dbReference type="EC" id="3.4.23.-" evidence="2"/>
<dbReference type="GO" id="GO:0005576">
    <property type="term" value="C:extracellular region"/>
    <property type="evidence" value="ECO:0007669"/>
    <property type="project" value="UniProtKB-SubCell"/>
</dbReference>
<dbReference type="GO" id="GO:0004190">
    <property type="term" value="F:aspartic-type endopeptidase activity"/>
    <property type="evidence" value="ECO:0007669"/>
    <property type="project" value="UniProtKB-KW"/>
</dbReference>
<dbReference type="GO" id="GO:0006508">
    <property type="term" value="P:proteolysis"/>
    <property type="evidence" value="ECO:0007669"/>
    <property type="project" value="UniProtKB-KW"/>
</dbReference>